<protein>
    <recommendedName>
        <fullName>Probable E3 ubiquitin-protein ligase ARI16</fullName>
        <ecNumber evidence="2">2.3.2.31</ecNumber>
    </recommendedName>
    <alternativeName>
        <fullName>ARIADNE-like protein ARI16</fullName>
    </alternativeName>
    <alternativeName>
        <fullName>Protein ariadne homolog 16</fullName>
    </alternativeName>
    <alternativeName>
        <fullName evidence="6">RING-type E3 ubiquitin transferase ARI16</fullName>
    </alternativeName>
</protein>
<reference key="1">
    <citation type="journal article" date="2003" name="Plant Physiol.">
        <title>Identification and characterization of the ARIADNE gene family in Arabidopsis. A group of putative E3 ligases.</title>
        <authorList>
            <person name="Mladek C."/>
            <person name="Guger K."/>
            <person name="Hauser M.-T."/>
        </authorList>
    </citation>
    <scope>NUCLEOTIDE SEQUENCE [GENOMIC DNA]</scope>
    <scope>TISSUE SPECIFICITY</scope>
    <scope>NOMENCLATURE</scope>
    <scope>GENE FAMILY</scope>
    <source>
        <strain>cv. Columbia</strain>
    </source>
</reference>
<reference key="2">
    <citation type="journal article" date="2000" name="Nature">
        <title>Sequence and analysis of chromosome 5 of the plant Arabidopsis thaliana.</title>
        <authorList>
            <person name="Tabata S."/>
            <person name="Kaneko T."/>
            <person name="Nakamura Y."/>
            <person name="Kotani H."/>
            <person name="Kato T."/>
            <person name="Asamizu E."/>
            <person name="Miyajima N."/>
            <person name="Sasamoto S."/>
            <person name="Kimura T."/>
            <person name="Hosouchi T."/>
            <person name="Kawashima K."/>
            <person name="Kohara M."/>
            <person name="Matsumoto M."/>
            <person name="Matsuno A."/>
            <person name="Muraki A."/>
            <person name="Nakayama S."/>
            <person name="Nakazaki N."/>
            <person name="Naruo K."/>
            <person name="Okumura S."/>
            <person name="Shinpo S."/>
            <person name="Takeuchi C."/>
            <person name="Wada T."/>
            <person name="Watanabe A."/>
            <person name="Yamada M."/>
            <person name="Yasuda M."/>
            <person name="Sato S."/>
            <person name="de la Bastide M."/>
            <person name="Huang E."/>
            <person name="Spiegel L."/>
            <person name="Gnoj L."/>
            <person name="O'Shaughnessy A."/>
            <person name="Preston R."/>
            <person name="Habermann K."/>
            <person name="Murray J."/>
            <person name="Johnson D."/>
            <person name="Rohlfing T."/>
            <person name="Nelson J."/>
            <person name="Stoneking T."/>
            <person name="Pepin K."/>
            <person name="Spieth J."/>
            <person name="Sekhon M."/>
            <person name="Armstrong J."/>
            <person name="Becker M."/>
            <person name="Belter E."/>
            <person name="Cordum H."/>
            <person name="Cordes M."/>
            <person name="Courtney L."/>
            <person name="Courtney W."/>
            <person name="Dante M."/>
            <person name="Du H."/>
            <person name="Edwards J."/>
            <person name="Fryman J."/>
            <person name="Haakensen B."/>
            <person name="Lamar E."/>
            <person name="Latreille P."/>
            <person name="Leonard S."/>
            <person name="Meyer R."/>
            <person name="Mulvaney E."/>
            <person name="Ozersky P."/>
            <person name="Riley A."/>
            <person name="Strowmatt C."/>
            <person name="Wagner-McPherson C."/>
            <person name="Wollam A."/>
            <person name="Yoakum M."/>
            <person name="Bell M."/>
            <person name="Dedhia N."/>
            <person name="Parnell L."/>
            <person name="Shah R."/>
            <person name="Rodriguez M."/>
            <person name="Hoon See L."/>
            <person name="Vil D."/>
            <person name="Baker J."/>
            <person name="Kirchoff K."/>
            <person name="Toth K."/>
            <person name="King L."/>
            <person name="Bahret A."/>
            <person name="Miller B."/>
            <person name="Marra M.A."/>
            <person name="Martienssen R."/>
            <person name="McCombie W.R."/>
            <person name="Wilson R.K."/>
            <person name="Murphy G."/>
            <person name="Bancroft I."/>
            <person name="Volckaert G."/>
            <person name="Wambutt R."/>
            <person name="Duesterhoeft A."/>
            <person name="Stiekema W."/>
            <person name="Pohl T."/>
            <person name="Entian K.-D."/>
            <person name="Terryn N."/>
            <person name="Hartley N."/>
            <person name="Bent E."/>
            <person name="Johnson S."/>
            <person name="Langham S.-A."/>
            <person name="McCullagh B."/>
            <person name="Robben J."/>
            <person name="Grymonprez B."/>
            <person name="Zimmermann W."/>
            <person name="Ramsperger U."/>
            <person name="Wedler H."/>
            <person name="Balke K."/>
            <person name="Wedler E."/>
            <person name="Peters S."/>
            <person name="van Staveren M."/>
            <person name="Dirkse W."/>
            <person name="Mooijman P."/>
            <person name="Klein Lankhorst R."/>
            <person name="Weitzenegger T."/>
            <person name="Bothe G."/>
            <person name="Rose M."/>
            <person name="Hauf J."/>
            <person name="Berneiser S."/>
            <person name="Hempel S."/>
            <person name="Feldpausch M."/>
            <person name="Lamberth S."/>
            <person name="Villarroel R."/>
            <person name="Gielen J."/>
            <person name="Ardiles W."/>
            <person name="Bents O."/>
            <person name="Lemcke K."/>
            <person name="Kolesov G."/>
            <person name="Mayer K.F.X."/>
            <person name="Rudd S."/>
            <person name="Schoof H."/>
            <person name="Schueller C."/>
            <person name="Zaccaria P."/>
            <person name="Mewes H.-W."/>
            <person name="Bevan M."/>
            <person name="Fransz P.F."/>
        </authorList>
    </citation>
    <scope>NUCLEOTIDE SEQUENCE [LARGE SCALE GENOMIC DNA]</scope>
    <source>
        <strain>cv. Columbia</strain>
    </source>
</reference>
<reference key="3">
    <citation type="journal article" date="2017" name="Plant J.">
        <title>Araport11: a complete reannotation of the Arabidopsis thaliana reference genome.</title>
        <authorList>
            <person name="Cheng C.Y."/>
            <person name="Krishnakumar V."/>
            <person name="Chan A.P."/>
            <person name="Thibaud-Nissen F."/>
            <person name="Schobel S."/>
            <person name="Town C.D."/>
        </authorList>
    </citation>
    <scope>GENOME REANNOTATION</scope>
    <source>
        <strain>cv. Columbia</strain>
    </source>
</reference>
<reference key="4">
    <citation type="journal article" date="2002" name="Mol. Biol. Evol.">
        <title>Comparative genomics of the RBR family, including the Parkinson's disease-related gene parkin and the genes of the ariadne subfamily.</title>
        <authorList>
            <person name="Marin I."/>
            <person name="Ferrus A."/>
        </authorList>
    </citation>
    <scope>FUNCTION</scope>
</reference>
<comment type="function">
    <text evidence="1 4">Might act as an E3 ubiquitin-protein ligase, or as part of E3 complex, which accepts ubiquitin from specific E2 ubiquitin-conjugating enzymes and then transfers it to substrates.</text>
</comment>
<comment type="catalytic activity">
    <reaction evidence="2">
        <text>[E2 ubiquitin-conjugating enzyme]-S-ubiquitinyl-L-cysteine + [acceptor protein]-L-lysine = [E2 ubiquitin-conjugating enzyme]-L-cysteine + [acceptor protein]-N(6)-ubiquitinyl-L-lysine.</text>
        <dbReference type="EC" id="2.3.2.31"/>
    </reaction>
</comment>
<comment type="cofactor">
    <cofactor evidence="6">
        <name>Zn(2+)</name>
        <dbReference type="ChEBI" id="CHEBI:29105"/>
    </cofactor>
    <text evidence="6">Binds 4 Zn(2+) ions per subunit.</text>
</comment>
<comment type="pathway">
    <text>Protein modification; protein ubiquitination.</text>
</comment>
<comment type="tissue specificity">
    <text evidence="5">Preferentially expressed in green siliques.</text>
</comment>
<comment type="domain">
    <text evidence="2">Members of the RBR family are atypical E3 ligases. They interact with the E2 conjugating enzyme UBE2L3 and function like HECT-type E3 enzymes: they bind E2s via the first RING-type zinc finger, but require an obligate trans-thiolation step during the ubiquitin transfer, requiring a conserved active site Cys residue in the second RING-type zinc finger. The active site probably forms a thioester intermediate with ubiquitin taken from the active-site cysteine of the E2 before ultimately transferring it to a Lys residue on the substrate.</text>
</comment>
<comment type="similarity">
    <text evidence="6">Belongs to the RBR family. Ariadne subfamily.</text>
</comment>
<comment type="caution">
    <text evidence="6">Lacks three Cys residues in the RING-type zinc finger domain 1 and two Cys residues in the RING-type zinc finger domain 2 that are conserved features of the family.</text>
</comment>
<proteinExistence type="evidence at transcript level"/>
<gene>
    <name type="primary">ARI16</name>
    <name type="ordered locus">At5g08730</name>
    <name type="ORF">T2K12.80</name>
</gene>
<name>ARI16_ARATH</name>
<feature type="chain" id="PRO_0000356209" description="Probable E3 ubiquitin-protein ligase ARI16">
    <location>
        <begin position="1"/>
        <end position="500"/>
    </location>
</feature>
<feature type="zinc finger region" description="RING-type 1" evidence="3">
    <location>
        <begin position="78"/>
        <end position="130"/>
    </location>
</feature>
<feature type="zinc finger region" description="IBR-type" evidence="3">
    <location>
        <begin position="148"/>
        <end position="214"/>
    </location>
</feature>
<feature type="zinc finger region" description="RING-type 2; atypical" evidence="3">
    <location>
        <begin position="241"/>
        <end position="271"/>
    </location>
</feature>
<feature type="zinc finger region" description="RanBP2-type">
    <location>
        <begin position="453"/>
        <end position="483"/>
    </location>
</feature>
<feature type="region of interest" description="TRIAD supradomain" evidence="3">
    <location>
        <begin position="74"/>
        <end position="288"/>
    </location>
</feature>
<feature type="binding site" evidence="3">
    <location>
        <position position="96"/>
    </location>
    <ligand>
        <name>Zn(2+)</name>
        <dbReference type="ChEBI" id="CHEBI:29105"/>
        <label>1</label>
    </ligand>
</feature>
<feature type="binding site" evidence="3">
    <location>
        <position position="98"/>
    </location>
    <ligand>
        <name>Zn(2+)</name>
        <dbReference type="ChEBI" id="CHEBI:29105"/>
        <label>1</label>
    </ligand>
</feature>
<feature type="binding site" evidence="3">
    <location>
        <position position="125"/>
    </location>
    <ligand>
        <name>Zn(2+)</name>
        <dbReference type="ChEBI" id="CHEBI:29105"/>
        <label>1</label>
    </ligand>
</feature>
<feature type="binding site" evidence="3">
    <location>
        <position position="130"/>
    </location>
    <ligand>
        <name>Zn(2+)</name>
        <dbReference type="ChEBI" id="CHEBI:29105"/>
        <label>1</label>
    </ligand>
</feature>
<feature type="binding site" evidence="3">
    <location>
        <position position="169"/>
    </location>
    <ligand>
        <name>Zn(2+)</name>
        <dbReference type="ChEBI" id="CHEBI:29105"/>
        <label>2</label>
    </ligand>
</feature>
<feature type="binding site" evidence="3">
    <location>
        <position position="174"/>
    </location>
    <ligand>
        <name>Zn(2+)</name>
        <dbReference type="ChEBI" id="CHEBI:29105"/>
        <label>2</label>
    </ligand>
</feature>
<feature type="binding site" evidence="3">
    <location>
        <position position="194"/>
    </location>
    <ligand>
        <name>Zn(2+)</name>
        <dbReference type="ChEBI" id="CHEBI:29105"/>
        <label>2</label>
    </ligand>
</feature>
<feature type="binding site" evidence="3">
    <location>
        <position position="196"/>
    </location>
    <ligand>
        <name>Zn(2+)</name>
        <dbReference type="ChEBI" id="CHEBI:29105"/>
        <label>2</label>
    </ligand>
</feature>
<feature type="binding site" evidence="3">
    <location>
        <position position="201"/>
    </location>
    <ligand>
        <name>Zn(2+)</name>
        <dbReference type="ChEBI" id="CHEBI:29105"/>
        <label>3</label>
    </ligand>
</feature>
<feature type="binding site" evidence="3">
    <location>
        <position position="204"/>
    </location>
    <ligand>
        <name>Zn(2+)</name>
        <dbReference type="ChEBI" id="CHEBI:29105"/>
        <label>3</label>
    </ligand>
</feature>
<feature type="binding site" evidence="3">
    <location>
        <position position="209"/>
    </location>
    <ligand>
        <name>Zn(2+)</name>
        <dbReference type="ChEBI" id="CHEBI:29105"/>
        <label>3</label>
    </ligand>
</feature>
<feature type="binding site" evidence="3">
    <location>
        <position position="214"/>
    </location>
    <ligand>
        <name>Zn(2+)</name>
        <dbReference type="ChEBI" id="CHEBI:29105"/>
        <label>3</label>
    </ligand>
</feature>
<feature type="binding site" evidence="3">
    <location>
        <position position="241"/>
    </location>
    <ligand>
        <name>Zn(2+)</name>
        <dbReference type="ChEBI" id="CHEBI:29105"/>
        <label>4</label>
    </ligand>
</feature>
<feature type="binding site" evidence="3">
    <location>
        <position position="244"/>
    </location>
    <ligand>
        <name>Zn(2+)</name>
        <dbReference type="ChEBI" id="CHEBI:29105"/>
        <label>4</label>
    </ligand>
</feature>
<feature type="binding site" evidence="3">
    <location>
        <position position="261"/>
    </location>
    <ligand>
        <name>Zn(2+)</name>
        <dbReference type="ChEBI" id="CHEBI:29105"/>
        <label>4</label>
    </ligand>
</feature>
<feature type="binding site" evidence="3">
    <location>
        <position position="263"/>
    </location>
    <ligand>
        <name>Zn(2+)</name>
        <dbReference type="ChEBI" id="CHEBI:29105"/>
        <label>4</label>
    </ligand>
</feature>
<feature type="binding site" evidence="3">
    <location>
        <position position="268"/>
    </location>
    <ligand>
        <name>Zn(2+)</name>
        <dbReference type="ChEBI" id="CHEBI:29105"/>
        <label>5</label>
    </ligand>
</feature>
<feature type="binding site" evidence="3">
    <location>
        <position position="271"/>
    </location>
    <ligand>
        <name>Zn(2+)</name>
        <dbReference type="ChEBI" id="CHEBI:29105"/>
        <label>5</label>
    </ligand>
</feature>
<feature type="binding site" evidence="3">
    <location>
        <position position="278"/>
    </location>
    <ligand>
        <name>Zn(2+)</name>
        <dbReference type="ChEBI" id="CHEBI:29105"/>
        <label>5</label>
    </ligand>
</feature>
<feature type="binding site" evidence="3">
    <location>
        <position position="284"/>
    </location>
    <ligand>
        <name>Zn(2+)</name>
        <dbReference type="ChEBI" id="CHEBI:29105"/>
        <label>5</label>
    </ligand>
</feature>
<dbReference type="EC" id="2.3.2.31" evidence="2"/>
<dbReference type="EMBL" id="AJ510219">
    <property type="protein sequence ID" value="CAD52898.1"/>
    <property type="molecule type" value="Genomic_DNA"/>
</dbReference>
<dbReference type="EMBL" id="AL590346">
    <property type="protein sequence ID" value="CAC35878.1"/>
    <property type="molecule type" value="Genomic_DNA"/>
</dbReference>
<dbReference type="EMBL" id="CP002688">
    <property type="protein sequence ID" value="AED91342.1"/>
    <property type="molecule type" value="Genomic_DNA"/>
</dbReference>
<dbReference type="RefSeq" id="NP_680158.1">
    <property type="nucleotide sequence ID" value="NM_147853.2"/>
</dbReference>
<dbReference type="SMR" id="Q9C5A4"/>
<dbReference type="STRING" id="3702.Q9C5A4"/>
<dbReference type="PaxDb" id="3702-AT5G08730.1"/>
<dbReference type="ProteomicsDB" id="240971"/>
<dbReference type="EnsemblPlants" id="AT5G08730.1">
    <property type="protein sequence ID" value="AT5G08730.1"/>
    <property type="gene ID" value="AT5G08730"/>
</dbReference>
<dbReference type="GeneID" id="830774"/>
<dbReference type="Gramene" id="AT5G08730.1">
    <property type="protein sequence ID" value="AT5G08730.1"/>
    <property type="gene ID" value="AT5G08730"/>
</dbReference>
<dbReference type="KEGG" id="ath:AT5G08730"/>
<dbReference type="Araport" id="AT5G08730"/>
<dbReference type="TAIR" id="AT5G08730">
    <property type="gene designation" value="ARI16"/>
</dbReference>
<dbReference type="eggNOG" id="KOG1815">
    <property type="taxonomic scope" value="Eukaryota"/>
</dbReference>
<dbReference type="HOGENOM" id="CLU_009823_3_2_1"/>
<dbReference type="InParanoid" id="Q9C5A4"/>
<dbReference type="OMA" id="IQRCHED"/>
<dbReference type="OrthoDB" id="10009520at2759"/>
<dbReference type="PhylomeDB" id="Q9C5A4"/>
<dbReference type="UniPathway" id="UPA00143"/>
<dbReference type="PRO" id="PR:Q9C5A4"/>
<dbReference type="Proteomes" id="UP000006548">
    <property type="component" value="Chromosome 5"/>
</dbReference>
<dbReference type="ExpressionAtlas" id="Q9C5A4">
    <property type="expression patterns" value="baseline and differential"/>
</dbReference>
<dbReference type="GO" id="GO:0004842">
    <property type="term" value="F:ubiquitin-protein transferase activity"/>
    <property type="evidence" value="ECO:0007669"/>
    <property type="project" value="InterPro"/>
</dbReference>
<dbReference type="GO" id="GO:0008270">
    <property type="term" value="F:zinc ion binding"/>
    <property type="evidence" value="ECO:0007669"/>
    <property type="project" value="UniProtKB-KW"/>
</dbReference>
<dbReference type="GO" id="GO:0016567">
    <property type="term" value="P:protein ubiquitination"/>
    <property type="evidence" value="ECO:0007669"/>
    <property type="project" value="UniProtKB-UniPathway"/>
</dbReference>
<dbReference type="CDD" id="cd20346">
    <property type="entry name" value="BRcat_RBR_ANKIB1"/>
    <property type="match status" value="1"/>
</dbReference>
<dbReference type="FunFam" id="3.30.40.10:FF:000892">
    <property type="entry name" value="Probable E3 ubiquitin-protein ligase ARI15"/>
    <property type="match status" value="1"/>
</dbReference>
<dbReference type="Gene3D" id="1.20.120.1750">
    <property type="match status" value="1"/>
</dbReference>
<dbReference type="Gene3D" id="3.30.40.10">
    <property type="entry name" value="Zinc/RING finger domain, C3HC4 (zinc finger)"/>
    <property type="match status" value="1"/>
</dbReference>
<dbReference type="InterPro" id="IPR031127">
    <property type="entry name" value="E3_UB_ligase_RBR"/>
</dbReference>
<dbReference type="InterPro" id="IPR002867">
    <property type="entry name" value="IBR_dom"/>
</dbReference>
<dbReference type="InterPro" id="IPR044066">
    <property type="entry name" value="TRIAD_supradom"/>
</dbReference>
<dbReference type="InterPro" id="IPR001876">
    <property type="entry name" value="Znf_RanBP2"/>
</dbReference>
<dbReference type="InterPro" id="IPR013083">
    <property type="entry name" value="Znf_RING/FYVE/PHD"/>
</dbReference>
<dbReference type="PANTHER" id="PTHR11685">
    <property type="entry name" value="RBR FAMILY RING FINGER AND IBR DOMAIN-CONTAINING"/>
    <property type="match status" value="1"/>
</dbReference>
<dbReference type="Pfam" id="PF01485">
    <property type="entry name" value="IBR"/>
    <property type="match status" value="1"/>
</dbReference>
<dbReference type="SMART" id="SM00647">
    <property type="entry name" value="IBR"/>
    <property type="match status" value="2"/>
</dbReference>
<dbReference type="SUPFAM" id="SSF57850">
    <property type="entry name" value="RING/U-box"/>
    <property type="match status" value="3"/>
</dbReference>
<dbReference type="PROSITE" id="PS51873">
    <property type="entry name" value="TRIAD"/>
    <property type="match status" value="1"/>
</dbReference>
<dbReference type="PROSITE" id="PS01358">
    <property type="entry name" value="ZF_RANBP2_1"/>
    <property type="match status" value="1"/>
</dbReference>
<evidence type="ECO:0000250" key="1"/>
<evidence type="ECO:0000250" key="2">
    <source>
        <dbReference type="UniProtKB" id="Q9Y4X5"/>
    </source>
</evidence>
<evidence type="ECO:0000255" key="3">
    <source>
        <dbReference type="PROSITE-ProRule" id="PRU01221"/>
    </source>
</evidence>
<evidence type="ECO:0000269" key="4">
    <source>
    </source>
</evidence>
<evidence type="ECO:0000269" key="5">
    <source>
    </source>
</evidence>
<evidence type="ECO:0000305" key="6"/>
<organism>
    <name type="scientific">Arabidopsis thaliana</name>
    <name type="common">Mouse-ear cress</name>
    <dbReference type="NCBI Taxonomy" id="3702"/>
    <lineage>
        <taxon>Eukaryota</taxon>
        <taxon>Viridiplantae</taxon>
        <taxon>Streptophyta</taxon>
        <taxon>Embryophyta</taxon>
        <taxon>Tracheophyta</taxon>
        <taxon>Spermatophyta</taxon>
        <taxon>Magnoliopsida</taxon>
        <taxon>eudicotyledons</taxon>
        <taxon>Gunneridae</taxon>
        <taxon>Pentapetalae</taxon>
        <taxon>rosids</taxon>
        <taxon>malvids</taxon>
        <taxon>Brassicales</taxon>
        <taxon>Brassicaceae</taxon>
        <taxon>Camelineae</taxon>
        <taxon>Arabidopsis</taxon>
    </lineage>
</organism>
<keyword id="KW-0479">Metal-binding</keyword>
<keyword id="KW-1185">Reference proteome</keyword>
<keyword id="KW-0677">Repeat</keyword>
<keyword id="KW-0808">Transferase</keyword>
<keyword id="KW-0833">Ubl conjugation pathway</keyword>
<keyword id="KW-0862">Zinc</keyword>
<keyword id="KW-0863">Zinc-finger</keyword>
<sequence>MEADGQKYSVLAKTQVREKMMKEIEQISEVFLVSKSDATVILIRLGWNSFKASDLLGDNKEKFLAKLGLARVLNSNSSSADRETGDGDYLVSTPFCSHKFSTTCWSEYLSDALKKNKEQRGLISCLSQDCVASVGPDTIEQLTEPVKEMYENYILESFMECHKATIKWCPASGCEYAVELQEDGNEDNVISVVCLCGHTFCWTCGLESHRPVSCKKASIWWTYLLDQSRSISWIHTNTKSCPKCKIPVQQNGDPNYRLINCICSNNFCWICLRTEEQHQGNWNCSPVAVPAAGPSTVEFSQILHLNLWEAGHEALKKAKSKLRALEEKIIPKLIENCGATELDIRTVREAGMLSVQCRQVLKWSCVFDYSIIEYESTKKQYLKHLRALASTMLCMHEGKLDELIHLALSPEDFTNYKHKLEISTTCTGNHFDGFIKELEDGKPEVKADGYENEPGSRWFCDRCTFENSWVDKQCKMCFFPLDYHPSPQVAAAPEDLGKSE</sequence>
<accession>Q9C5A4</accession>